<reference key="1">
    <citation type="journal article" date="2003" name="Lancet">
        <title>Sequencing and analysis of the genome of the Whipple's disease bacterium Tropheryma whipplei.</title>
        <authorList>
            <person name="Bentley S.D."/>
            <person name="Maiwald M."/>
            <person name="Murphy L.D."/>
            <person name="Pallen M.J."/>
            <person name="Yeats C.A."/>
            <person name="Dover L.G."/>
            <person name="Norbertczak H.T."/>
            <person name="Besra G.S."/>
            <person name="Quail M.A."/>
            <person name="Harris D.E."/>
            <person name="von Herbay A."/>
            <person name="Goble A."/>
            <person name="Rutter S."/>
            <person name="Squares R."/>
            <person name="Squares S."/>
            <person name="Barrell B.G."/>
            <person name="Parkhill J."/>
            <person name="Relman D.A."/>
        </authorList>
    </citation>
    <scope>NUCLEOTIDE SEQUENCE [LARGE SCALE GENOMIC DNA]</scope>
    <source>
        <strain>TW08/27</strain>
    </source>
</reference>
<protein>
    <recommendedName>
        <fullName>Putative cysteine--tRNA ligase 2</fullName>
        <ecNumber>6.1.1.16</ecNumber>
    </recommendedName>
    <alternativeName>
        <fullName>Cysteinyl-tRNA synthetase 2</fullName>
        <shortName>CysRS 2</shortName>
    </alternativeName>
</protein>
<gene>
    <name type="primary">cysS2</name>
    <name type="ordered locus">TW456</name>
</gene>
<dbReference type="EC" id="6.1.1.16"/>
<dbReference type="EMBL" id="BX251411">
    <property type="protein sequence ID" value="CAD67124.1"/>
    <property type="molecule type" value="Genomic_DNA"/>
</dbReference>
<dbReference type="RefSeq" id="WP_011096404.1">
    <property type="nucleotide sequence ID" value="NC_004551.1"/>
</dbReference>
<dbReference type="SMR" id="Q83HQ8"/>
<dbReference type="GeneID" id="67388232"/>
<dbReference type="KEGG" id="tws:TW456"/>
<dbReference type="HOGENOM" id="CLU_013528_0_0_11"/>
<dbReference type="GO" id="GO:0005829">
    <property type="term" value="C:cytosol"/>
    <property type="evidence" value="ECO:0007669"/>
    <property type="project" value="TreeGrafter"/>
</dbReference>
<dbReference type="GO" id="GO:0005524">
    <property type="term" value="F:ATP binding"/>
    <property type="evidence" value="ECO:0007669"/>
    <property type="project" value="UniProtKB-KW"/>
</dbReference>
<dbReference type="GO" id="GO:0004817">
    <property type="term" value="F:cysteine-tRNA ligase activity"/>
    <property type="evidence" value="ECO:0007669"/>
    <property type="project" value="UniProtKB-EC"/>
</dbReference>
<dbReference type="GO" id="GO:0006423">
    <property type="term" value="P:cysteinyl-tRNA aminoacylation"/>
    <property type="evidence" value="ECO:0007669"/>
    <property type="project" value="TreeGrafter"/>
</dbReference>
<dbReference type="Gene3D" id="1.20.120.640">
    <property type="entry name" value="Anticodon-binding domain of a subclass of class I aminoacyl-tRNA synthetases"/>
    <property type="match status" value="1"/>
</dbReference>
<dbReference type="Gene3D" id="3.40.50.620">
    <property type="entry name" value="HUPs"/>
    <property type="match status" value="1"/>
</dbReference>
<dbReference type="InterPro" id="IPR024909">
    <property type="entry name" value="Cys-tRNA/MSH_ligase"/>
</dbReference>
<dbReference type="InterPro" id="IPR014729">
    <property type="entry name" value="Rossmann-like_a/b/a_fold"/>
</dbReference>
<dbReference type="InterPro" id="IPR032678">
    <property type="entry name" value="tRNA-synt_1_cat_dom"/>
</dbReference>
<dbReference type="PANTHER" id="PTHR10890:SF3">
    <property type="entry name" value="CYSTEINE--TRNA LIGASE, CYTOPLASMIC"/>
    <property type="match status" value="1"/>
</dbReference>
<dbReference type="PANTHER" id="PTHR10890">
    <property type="entry name" value="CYSTEINYL-TRNA SYNTHETASE"/>
    <property type="match status" value="1"/>
</dbReference>
<dbReference type="Pfam" id="PF01406">
    <property type="entry name" value="tRNA-synt_1e"/>
    <property type="match status" value="1"/>
</dbReference>
<dbReference type="PRINTS" id="PR00983">
    <property type="entry name" value="TRNASYNTHCYS"/>
</dbReference>
<dbReference type="SUPFAM" id="SSF52374">
    <property type="entry name" value="Nucleotidylyl transferase"/>
    <property type="match status" value="1"/>
</dbReference>
<name>SYC2_TROW8</name>
<proteinExistence type="inferred from homology"/>
<sequence>MYTFEVFDSRTRSIVKLEDCLLRLYVCGITPYKSTHLGHAFTYVGFDTLFRLALDSGRDVLYIQNISDIDEPLFQYAEKVGIHYKDLARTQTKRFFEDMHTLECLPPGYVIPVSKVLDGIKTGIEGLISRNMAYKLPNGDVYFDSTLTDPGKMFCFDRKTAMSLMLETDTGKNPFDPLLWRGRGAEPQWEASFGAGRPAWHISCAVLSNLQTQYENVLHIYGGGRDLAFPHHEFTNVLSKLIRAPKDNKQQDTVQDVFMHTGLVSYMGDKMSKSKGNLVFISQLREQCEKIGLHHSVIRLALLQRHYREDWEWQDECLDRAASRFRLWKSALQEYIGAKGIRSTADQNKGTQGAWERIHGGVFDSNFDHRQPIHPKHSPQMRDYSEHGSAGQNGTDLDLSLYQAIRFHLCNDLDTPKALDAVDSYARKGTITIPEARAVEKLLGIPLTRV</sequence>
<evidence type="ECO:0000250" key="1"/>
<evidence type="ECO:0000256" key="2">
    <source>
        <dbReference type="SAM" id="MobiDB-lite"/>
    </source>
</evidence>
<evidence type="ECO:0000305" key="3"/>
<feature type="chain" id="PRO_0000159513" description="Putative cysteine--tRNA ligase 2">
    <location>
        <begin position="1"/>
        <end position="450"/>
    </location>
</feature>
<feature type="region of interest" description="Disordered" evidence="2">
    <location>
        <begin position="372"/>
        <end position="392"/>
    </location>
</feature>
<feature type="short sequence motif" description="'HIGH' region">
    <location>
        <begin position="29"/>
        <end position="39"/>
    </location>
</feature>
<feature type="short sequence motif" description="'KMSKS' region">
    <location>
        <begin position="270"/>
        <end position="274"/>
    </location>
</feature>
<feature type="binding site" evidence="1">
    <location>
        <position position="273"/>
    </location>
    <ligand>
        <name>ATP</name>
        <dbReference type="ChEBI" id="CHEBI:30616"/>
    </ligand>
</feature>
<keyword id="KW-0030">Aminoacyl-tRNA synthetase</keyword>
<keyword id="KW-0067">ATP-binding</keyword>
<keyword id="KW-0963">Cytoplasm</keyword>
<keyword id="KW-0436">Ligase</keyword>
<keyword id="KW-0547">Nucleotide-binding</keyword>
<keyword id="KW-0648">Protein biosynthesis</keyword>
<comment type="catalytic activity">
    <reaction>
        <text>tRNA(Cys) + L-cysteine + ATP = L-cysteinyl-tRNA(Cys) + AMP + diphosphate</text>
        <dbReference type="Rhea" id="RHEA:17773"/>
        <dbReference type="Rhea" id="RHEA-COMP:9661"/>
        <dbReference type="Rhea" id="RHEA-COMP:9679"/>
        <dbReference type="ChEBI" id="CHEBI:30616"/>
        <dbReference type="ChEBI" id="CHEBI:33019"/>
        <dbReference type="ChEBI" id="CHEBI:35235"/>
        <dbReference type="ChEBI" id="CHEBI:78442"/>
        <dbReference type="ChEBI" id="CHEBI:78517"/>
        <dbReference type="ChEBI" id="CHEBI:456215"/>
        <dbReference type="EC" id="6.1.1.16"/>
    </reaction>
</comment>
<comment type="subunit">
    <text evidence="1">Monomer.</text>
</comment>
<comment type="subcellular location">
    <subcellularLocation>
        <location evidence="1">Cytoplasm</location>
    </subcellularLocation>
</comment>
<comment type="similarity">
    <text evidence="3">Belongs to the class-I aminoacyl-tRNA synthetase family.</text>
</comment>
<organism>
    <name type="scientific">Tropheryma whipplei (strain TW08/27)</name>
    <name type="common">Whipple's bacillus</name>
    <dbReference type="NCBI Taxonomy" id="218496"/>
    <lineage>
        <taxon>Bacteria</taxon>
        <taxon>Bacillati</taxon>
        <taxon>Actinomycetota</taxon>
        <taxon>Actinomycetes</taxon>
        <taxon>Micrococcales</taxon>
        <taxon>Tropherymataceae</taxon>
        <taxon>Tropheryma</taxon>
    </lineage>
</organism>
<accession>Q83HQ8</accession>